<reference key="1">
    <citation type="journal article" date="1996" name="Science">
        <title>Complete genome sequence of the methanogenic archaeon, Methanococcus jannaschii.</title>
        <authorList>
            <person name="Bult C.J."/>
            <person name="White O."/>
            <person name="Olsen G.J."/>
            <person name="Zhou L."/>
            <person name="Fleischmann R.D."/>
            <person name="Sutton G.G."/>
            <person name="Blake J.A."/>
            <person name="FitzGerald L.M."/>
            <person name="Clayton R.A."/>
            <person name="Gocayne J.D."/>
            <person name="Kerlavage A.R."/>
            <person name="Dougherty B.A."/>
            <person name="Tomb J.-F."/>
            <person name="Adams M.D."/>
            <person name="Reich C.I."/>
            <person name="Overbeek R."/>
            <person name="Kirkness E.F."/>
            <person name="Weinstock K.G."/>
            <person name="Merrick J.M."/>
            <person name="Glodek A."/>
            <person name="Scott J.L."/>
            <person name="Geoghagen N.S.M."/>
            <person name="Weidman J.F."/>
            <person name="Fuhrmann J.L."/>
            <person name="Nguyen D."/>
            <person name="Utterback T.R."/>
            <person name="Kelley J.M."/>
            <person name="Peterson J.D."/>
            <person name="Sadow P.W."/>
            <person name="Hanna M.C."/>
            <person name="Cotton M.D."/>
            <person name="Roberts K.M."/>
            <person name="Hurst M.A."/>
            <person name="Kaine B.P."/>
            <person name="Borodovsky M."/>
            <person name="Klenk H.-P."/>
            <person name="Fraser C.M."/>
            <person name="Smith H.O."/>
            <person name="Woese C.R."/>
            <person name="Venter J.C."/>
        </authorList>
    </citation>
    <scope>NUCLEOTIDE SEQUENCE [LARGE SCALE GENOMIC DNA]</scope>
    <source>
        <strain>ATCC 43067 / DSM 2661 / JAL-1 / JCM 10045 / NBRC 100440</strain>
    </source>
</reference>
<name>NAC_METJA</name>
<comment type="function">
    <text evidence="1">Contacts the emerging nascent chain on the ribosome.</text>
</comment>
<comment type="subunit">
    <text evidence="1">Homodimer. Interacts with the ribosome. Binds ribosomal RNA.</text>
</comment>
<comment type="similarity">
    <text evidence="1">Belongs to the NAC-alpha family.</text>
</comment>
<keyword id="KW-0653">Protein transport</keyword>
<keyword id="KW-1185">Reference proteome</keyword>
<keyword id="KW-0694">RNA-binding</keyword>
<keyword id="KW-0813">Transport</keyword>
<accession>Q57728</accession>
<gene>
    <name evidence="1" type="primary">nac</name>
    <name type="ordered locus">MJ0280</name>
</gene>
<sequence length="128" mass="14958">MFPGKVNPRMLKKMQKMMKDFGMETEDLDVRKVIFVFDDEEWVFEEPKVQVMDILGVKTYSITGKPKKIKKEKVEEEEEVKVEITEEDVELVAKQCNVSKEEARKALEECNGDIAEAILKLEEEKEEN</sequence>
<evidence type="ECO:0000255" key="1">
    <source>
        <dbReference type="HAMAP-Rule" id="MF_00814"/>
    </source>
</evidence>
<dbReference type="EMBL" id="L77117">
    <property type="protein sequence ID" value="AAB98268.1"/>
    <property type="molecule type" value="Genomic_DNA"/>
</dbReference>
<dbReference type="PIR" id="A64335">
    <property type="entry name" value="A64335"/>
</dbReference>
<dbReference type="RefSeq" id="WP_010869778.1">
    <property type="nucleotide sequence ID" value="NC_000909.1"/>
</dbReference>
<dbReference type="SMR" id="Q57728"/>
<dbReference type="FunCoup" id="Q57728">
    <property type="interactions" value="73"/>
</dbReference>
<dbReference type="STRING" id="243232.MJ_0280"/>
<dbReference type="PaxDb" id="243232-MJ_0280"/>
<dbReference type="EnsemblBacteria" id="AAB98268">
    <property type="protein sequence ID" value="AAB98268"/>
    <property type="gene ID" value="MJ_0280"/>
</dbReference>
<dbReference type="GeneID" id="1451135"/>
<dbReference type="KEGG" id="mja:MJ_0280"/>
<dbReference type="eggNOG" id="arCOG04061">
    <property type="taxonomic scope" value="Archaea"/>
</dbReference>
<dbReference type="HOGENOM" id="CLU_146475_1_0_2"/>
<dbReference type="InParanoid" id="Q57728"/>
<dbReference type="OrthoDB" id="53273at2157"/>
<dbReference type="PhylomeDB" id="Q57728"/>
<dbReference type="Proteomes" id="UP000000805">
    <property type="component" value="Chromosome"/>
</dbReference>
<dbReference type="GO" id="GO:0003723">
    <property type="term" value="F:RNA binding"/>
    <property type="evidence" value="ECO:0007669"/>
    <property type="project" value="UniProtKB-UniRule"/>
</dbReference>
<dbReference type="GO" id="GO:0043066">
    <property type="term" value="P:negative regulation of apoptotic process"/>
    <property type="evidence" value="ECO:0000318"/>
    <property type="project" value="GO_Central"/>
</dbReference>
<dbReference type="GO" id="GO:0050821">
    <property type="term" value="P:protein stabilization"/>
    <property type="evidence" value="ECO:0000318"/>
    <property type="project" value="GO_Central"/>
</dbReference>
<dbReference type="GO" id="GO:0015031">
    <property type="term" value="P:protein transport"/>
    <property type="evidence" value="ECO:0007669"/>
    <property type="project" value="UniProtKB-UniRule"/>
</dbReference>
<dbReference type="CDD" id="cd14359">
    <property type="entry name" value="UBA_AeNAC"/>
    <property type="match status" value="1"/>
</dbReference>
<dbReference type="Gene3D" id="1.10.8.10">
    <property type="entry name" value="DNA helicase RuvA subunit, C-terminal domain"/>
    <property type="match status" value="1"/>
</dbReference>
<dbReference type="Gene3D" id="2.20.70.30">
    <property type="entry name" value="Nascent polypeptide-associated complex domain"/>
    <property type="match status" value="1"/>
</dbReference>
<dbReference type="HAMAP" id="MF_00814">
    <property type="entry name" value="NAC_arch"/>
    <property type="match status" value="1"/>
</dbReference>
<dbReference type="InterPro" id="IPR052617">
    <property type="entry name" value="Huntingtin-int_K"/>
</dbReference>
<dbReference type="InterPro" id="IPR044034">
    <property type="entry name" value="NAC-like_UBA"/>
</dbReference>
<dbReference type="InterPro" id="IPR038187">
    <property type="entry name" value="NAC_A/B_dom_sf"/>
</dbReference>
<dbReference type="InterPro" id="IPR005231">
    <property type="entry name" value="NAC_arc"/>
</dbReference>
<dbReference type="InterPro" id="IPR002715">
    <property type="entry name" value="Nas_poly-pep-assoc_cplx_dom"/>
</dbReference>
<dbReference type="InterPro" id="IPR009060">
    <property type="entry name" value="UBA-like_sf"/>
</dbReference>
<dbReference type="NCBIfam" id="TIGR00264">
    <property type="entry name" value="archaeal-type nascent polypeptide-associated complex protein"/>
    <property type="match status" value="1"/>
</dbReference>
<dbReference type="PANTHER" id="PTHR31184:SF2">
    <property type="entry name" value="HUNTINGTIN-INTERACTING PROTEIN K"/>
    <property type="match status" value="1"/>
</dbReference>
<dbReference type="PANTHER" id="PTHR31184">
    <property type="entry name" value="HUNTINGTIN-INTERACTING PROTEIN K FAMILY MEMBER"/>
    <property type="match status" value="1"/>
</dbReference>
<dbReference type="Pfam" id="PF01849">
    <property type="entry name" value="NAC"/>
    <property type="match status" value="1"/>
</dbReference>
<dbReference type="Pfam" id="PF19026">
    <property type="entry name" value="UBA_HYPK"/>
    <property type="match status" value="1"/>
</dbReference>
<dbReference type="SMART" id="SM01407">
    <property type="entry name" value="NAC"/>
    <property type="match status" value="1"/>
</dbReference>
<dbReference type="SUPFAM" id="SSF46934">
    <property type="entry name" value="UBA-like"/>
    <property type="match status" value="1"/>
</dbReference>
<dbReference type="PROSITE" id="PS51151">
    <property type="entry name" value="NAC_AB"/>
    <property type="match status" value="1"/>
</dbReference>
<feature type="chain" id="PRO_0000135601" description="Nascent polypeptide-associated complex protein">
    <location>
        <begin position="1"/>
        <end position="128"/>
    </location>
</feature>
<feature type="domain" description="NAC-A/B" evidence="1">
    <location>
        <begin position="8"/>
        <end position="75"/>
    </location>
</feature>
<protein>
    <recommendedName>
        <fullName evidence="1">Nascent polypeptide-associated complex protein</fullName>
    </recommendedName>
</protein>
<organism>
    <name type="scientific">Methanocaldococcus jannaschii (strain ATCC 43067 / DSM 2661 / JAL-1 / JCM 10045 / NBRC 100440)</name>
    <name type="common">Methanococcus jannaschii</name>
    <dbReference type="NCBI Taxonomy" id="243232"/>
    <lineage>
        <taxon>Archaea</taxon>
        <taxon>Methanobacteriati</taxon>
        <taxon>Methanobacteriota</taxon>
        <taxon>Methanomada group</taxon>
        <taxon>Methanococci</taxon>
        <taxon>Methanococcales</taxon>
        <taxon>Methanocaldococcaceae</taxon>
        <taxon>Methanocaldococcus</taxon>
    </lineage>
</organism>
<proteinExistence type="inferred from homology"/>